<organism>
    <name type="scientific">Staphylococcus carnosus (strain TM300)</name>
    <dbReference type="NCBI Taxonomy" id="396513"/>
    <lineage>
        <taxon>Bacteria</taxon>
        <taxon>Bacillati</taxon>
        <taxon>Bacillota</taxon>
        <taxon>Bacilli</taxon>
        <taxon>Bacillales</taxon>
        <taxon>Staphylococcaceae</taxon>
        <taxon>Staphylococcus</taxon>
    </lineage>
</organism>
<accession>B9DMF2</accession>
<protein>
    <recommendedName>
        <fullName evidence="1">Uracil phosphoribosyltransferase</fullName>
        <ecNumber evidence="1">2.4.2.9</ecNumber>
    </recommendedName>
    <alternativeName>
        <fullName evidence="1">UMP pyrophosphorylase</fullName>
    </alternativeName>
    <alternativeName>
        <fullName evidence="1">UPRTase</fullName>
    </alternativeName>
</protein>
<sequence>MGKVHVFDHPLIQHKMSYIRDANTGTKEFRELVDEVGMLMAYEVTRDLELQDVEIETPVTKTTAKRLSGKKLAFVPILRAGLGMTQGILSLIPAARVGHVGLYRDPETLEAVEYFVKLPQDIEEREIVVVDPMLATGASAIEAINSLKNRGAKNIRFMCLIAALEGVEKLQEAHPDVDIFIAALDEKLNDKAYITPGLGDAGDRLFGTK</sequence>
<keyword id="KW-0021">Allosteric enzyme</keyword>
<keyword id="KW-0328">Glycosyltransferase</keyword>
<keyword id="KW-0342">GTP-binding</keyword>
<keyword id="KW-0460">Magnesium</keyword>
<keyword id="KW-0547">Nucleotide-binding</keyword>
<keyword id="KW-1185">Reference proteome</keyword>
<keyword id="KW-0808">Transferase</keyword>
<comment type="function">
    <text evidence="1">Catalyzes the conversion of uracil and 5-phospho-alpha-D-ribose 1-diphosphate (PRPP) to UMP and diphosphate.</text>
</comment>
<comment type="catalytic activity">
    <reaction evidence="1">
        <text>UMP + diphosphate = 5-phospho-alpha-D-ribose 1-diphosphate + uracil</text>
        <dbReference type="Rhea" id="RHEA:13017"/>
        <dbReference type="ChEBI" id="CHEBI:17568"/>
        <dbReference type="ChEBI" id="CHEBI:33019"/>
        <dbReference type="ChEBI" id="CHEBI:57865"/>
        <dbReference type="ChEBI" id="CHEBI:58017"/>
        <dbReference type="EC" id="2.4.2.9"/>
    </reaction>
</comment>
<comment type="cofactor">
    <cofactor evidence="1">
        <name>Mg(2+)</name>
        <dbReference type="ChEBI" id="CHEBI:18420"/>
    </cofactor>
    <text evidence="1">Binds 1 Mg(2+) ion per subunit. The magnesium is bound as Mg-PRPP.</text>
</comment>
<comment type="activity regulation">
    <text evidence="1">Allosterically activated by GTP.</text>
</comment>
<comment type="pathway">
    <text evidence="1">Pyrimidine metabolism; UMP biosynthesis via salvage pathway; UMP from uracil: step 1/1.</text>
</comment>
<comment type="similarity">
    <text evidence="1">Belongs to the UPRTase family.</text>
</comment>
<feature type="chain" id="PRO_1000164835" description="Uracil phosphoribosyltransferase">
    <location>
        <begin position="1"/>
        <end position="209"/>
    </location>
</feature>
<feature type="binding site" evidence="1">
    <location>
        <position position="79"/>
    </location>
    <ligand>
        <name>5-phospho-alpha-D-ribose 1-diphosphate</name>
        <dbReference type="ChEBI" id="CHEBI:58017"/>
    </ligand>
</feature>
<feature type="binding site" evidence="1">
    <location>
        <position position="104"/>
    </location>
    <ligand>
        <name>5-phospho-alpha-D-ribose 1-diphosphate</name>
        <dbReference type="ChEBI" id="CHEBI:58017"/>
    </ligand>
</feature>
<feature type="binding site" evidence="1">
    <location>
        <begin position="131"/>
        <end position="139"/>
    </location>
    <ligand>
        <name>5-phospho-alpha-D-ribose 1-diphosphate</name>
        <dbReference type="ChEBI" id="CHEBI:58017"/>
    </ligand>
</feature>
<feature type="binding site" evidence="1">
    <location>
        <position position="194"/>
    </location>
    <ligand>
        <name>uracil</name>
        <dbReference type="ChEBI" id="CHEBI:17568"/>
    </ligand>
</feature>
<feature type="binding site" evidence="1">
    <location>
        <begin position="199"/>
        <end position="201"/>
    </location>
    <ligand>
        <name>uracil</name>
        <dbReference type="ChEBI" id="CHEBI:17568"/>
    </ligand>
</feature>
<feature type="binding site" evidence="1">
    <location>
        <position position="200"/>
    </location>
    <ligand>
        <name>5-phospho-alpha-D-ribose 1-diphosphate</name>
        <dbReference type="ChEBI" id="CHEBI:58017"/>
    </ligand>
</feature>
<gene>
    <name evidence="1" type="primary">upp</name>
    <name type="ordered locus">Sca_1615</name>
</gene>
<name>UPP_STACT</name>
<dbReference type="EC" id="2.4.2.9" evidence="1"/>
<dbReference type="EMBL" id="AM295250">
    <property type="protein sequence ID" value="CAL28521.1"/>
    <property type="molecule type" value="Genomic_DNA"/>
</dbReference>
<dbReference type="RefSeq" id="WP_015900861.1">
    <property type="nucleotide sequence ID" value="NC_012121.1"/>
</dbReference>
<dbReference type="SMR" id="B9DMF2"/>
<dbReference type="GeneID" id="93794069"/>
<dbReference type="KEGG" id="sca:SCA_1615"/>
<dbReference type="eggNOG" id="COG0035">
    <property type="taxonomic scope" value="Bacteria"/>
</dbReference>
<dbReference type="HOGENOM" id="CLU_067096_2_2_9"/>
<dbReference type="OrthoDB" id="9781675at2"/>
<dbReference type="BioCyc" id="SCAR396513:SCA_RS08205-MONOMER"/>
<dbReference type="UniPathway" id="UPA00574">
    <property type="reaction ID" value="UER00636"/>
</dbReference>
<dbReference type="Proteomes" id="UP000000444">
    <property type="component" value="Chromosome"/>
</dbReference>
<dbReference type="GO" id="GO:0005525">
    <property type="term" value="F:GTP binding"/>
    <property type="evidence" value="ECO:0007669"/>
    <property type="project" value="UniProtKB-KW"/>
</dbReference>
<dbReference type="GO" id="GO:0000287">
    <property type="term" value="F:magnesium ion binding"/>
    <property type="evidence" value="ECO:0007669"/>
    <property type="project" value="UniProtKB-UniRule"/>
</dbReference>
<dbReference type="GO" id="GO:0004845">
    <property type="term" value="F:uracil phosphoribosyltransferase activity"/>
    <property type="evidence" value="ECO:0007669"/>
    <property type="project" value="UniProtKB-UniRule"/>
</dbReference>
<dbReference type="GO" id="GO:0044206">
    <property type="term" value="P:UMP salvage"/>
    <property type="evidence" value="ECO:0007669"/>
    <property type="project" value="UniProtKB-UniRule"/>
</dbReference>
<dbReference type="GO" id="GO:0006223">
    <property type="term" value="P:uracil salvage"/>
    <property type="evidence" value="ECO:0007669"/>
    <property type="project" value="InterPro"/>
</dbReference>
<dbReference type="CDD" id="cd06223">
    <property type="entry name" value="PRTases_typeI"/>
    <property type="match status" value="1"/>
</dbReference>
<dbReference type="FunFam" id="3.40.50.2020:FF:000003">
    <property type="entry name" value="Uracil phosphoribosyltransferase"/>
    <property type="match status" value="1"/>
</dbReference>
<dbReference type="Gene3D" id="3.40.50.2020">
    <property type="match status" value="1"/>
</dbReference>
<dbReference type="HAMAP" id="MF_01218_B">
    <property type="entry name" value="Upp_B"/>
    <property type="match status" value="1"/>
</dbReference>
<dbReference type="InterPro" id="IPR000836">
    <property type="entry name" value="PRibTrfase_dom"/>
</dbReference>
<dbReference type="InterPro" id="IPR029057">
    <property type="entry name" value="PRTase-like"/>
</dbReference>
<dbReference type="InterPro" id="IPR034332">
    <property type="entry name" value="Upp_B"/>
</dbReference>
<dbReference type="InterPro" id="IPR050054">
    <property type="entry name" value="UPRTase/APRTase"/>
</dbReference>
<dbReference type="InterPro" id="IPR005765">
    <property type="entry name" value="Ura_phspho_trans"/>
</dbReference>
<dbReference type="NCBIfam" id="NF001097">
    <property type="entry name" value="PRK00129.1"/>
    <property type="match status" value="1"/>
</dbReference>
<dbReference type="NCBIfam" id="TIGR01091">
    <property type="entry name" value="upp"/>
    <property type="match status" value="1"/>
</dbReference>
<dbReference type="PANTHER" id="PTHR32315">
    <property type="entry name" value="ADENINE PHOSPHORIBOSYLTRANSFERASE"/>
    <property type="match status" value="1"/>
</dbReference>
<dbReference type="PANTHER" id="PTHR32315:SF4">
    <property type="entry name" value="URACIL PHOSPHORIBOSYLTRANSFERASE, CHLOROPLASTIC"/>
    <property type="match status" value="1"/>
</dbReference>
<dbReference type="Pfam" id="PF14681">
    <property type="entry name" value="UPRTase"/>
    <property type="match status" value="1"/>
</dbReference>
<dbReference type="SUPFAM" id="SSF53271">
    <property type="entry name" value="PRTase-like"/>
    <property type="match status" value="1"/>
</dbReference>
<reference key="1">
    <citation type="journal article" date="2009" name="Appl. Environ. Microbiol.">
        <title>Genome analysis of the meat starter culture bacterium Staphylococcus carnosus TM300.</title>
        <authorList>
            <person name="Rosenstein R."/>
            <person name="Nerz C."/>
            <person name="Biswas L."/>
            <person name="Resch A."/>
            <person name="Raddatz G."/>
            <person name="Schuster S.C."/>
            <person name="Goetz F."/>
        </authorList>
    </citation>
    <scope>NUCLEOTIDE SEQUENCE [LARGE SCALE GENOMIC DNA]</scope>
    <source>
        <strain>TM300</strain>
    </source>
</reference>
<evidence type="ECO:0000255" key="1">
    <source>
        <dbReference type="HAMAP-Rule" id="MF_01218"/>
    </source>
</evidence>
<proteinExistence type="inferred from homology"/>